<proteinExistence type="inferred from homology"/>
<organism>
    <name type="scientific">Bordetella bronchiseptica (strain ATCC BAA-588 / NCTC 13252 / RB50)</name>
    <name type="common">Alcaligenes bronchisepticus</name>
    <dbReference type="NCBI Taxonomy" id="257310"/>
    <lineage>
        <taxon>Bacteria</taxon>
        <taxon>Pseudomonadati</taxon>
        <taxon>Pseudomonadota</taxon>
        <taxon>Betaproteobacteria</taxon>
        <taxon>Burkholderiales</taxon>
        <taxon>Alcaligenaceae</taxon>
        <taxon>Bordetella</taxon>
    </lineage>
</organism>
<sequence>MKRKTLTQYLVEQQRSAQALGPEVRLLIEVVARACKAISHAVSKGALGGVLGSLESENVQGEVQKKLDVLSNEILLEANEWGGHLAAMASEEMETIHLIPNRYPKGEYLLLFDPLDGSSNIDVNVSIGTIFSVLRAPHRVAGADVCEQDFLQPGSQQVAAGYAVYGPQTMLVLTIGNGVVGFTLDREMGSWVLTHESMRIPEDTKEFAINMSNMRHWAPPVKRYIDECLAGKTGPLGKDYNMRWIASMVADVHRILTRGGIFMYPWDAREPGKAGKLRLMYEANPMGLIVEQAGGAAIDGTGRILDIQPDKLHQRVSVILGSKNEVERVGRYHAEAHAS</sequence>
<keyword id="KW-0119">Carbohydrate metabolism</keyword>
<keyword id="KW-0963">Cytoplasm</keyword>
<keyword id="KW-0378">Hydrolase</keyword>
<keyword id="KW-0460">Magnesium</keyword>
<keyword id="KW-0479">Metal-binding</keyword>
<dbReference type="EC" id="3.1.3.11" evidence="1"/>
<dbReference type="EMBL" id="BX640442">
    <property type="protein sequence ID" value="CAE32426.1"/>
    <property type="molecule type" value="Genomic_DNA"/>
</dbReference>
<dbReference type="RefSeq" id="WP_003813068.1">
    <property type="nucleotide sequence ID" value="NC_002927.3"/>
</dbReference>
<dbReference type="SMR" id="Q7WL20"/>
<dbReference type="KEGG" id="bbr:BB1929"/>
<dbReference type="eggNOG" id="COG0158">
    <property type="taxonomic scope" value="Bacteria"/>
</dbReference>
<dbReference type="HOGENOM" id="CLU_039977_0_0_4"/>
<dbReference type="UniPathway" id="UPA00138"/>
<dbReference type="Proteomes" id="UP000001027">
    <property type="component" value="Chromosome"/>
</dbReference>
<dbReference type="GO" id="GO:0005829">
    <property type="term" value="C:cytosol"/>
    <property type="evidence" value="ECO:0007669"/>
    <property type="project" value="TreeGrafter"/>
</dbReference>
<dbReference type="GO" id="GO:0042132">
    <property type="term" value="F:fructose 1,6-bisphosphate 1-phosphatase activity"/>
    <property type="evidence" value="ECO:0007669"/>
    <property type="project" value="UniProtKB-UniRule"/>
</dbReference>
<dbReference type="GO" id="GO:0000287">
    <property type="term" value="F:magnesium ion binding"/>
    <property type="evidence" value="ECO:0007669"/>
    <property type="project" value="UniProtKB-UniRule"/>
</dbReference>
<dbReference type="GO" id="GO:0030388">
    <property type="term" value="P:fructose 1,6-bisphosphate metabolic process"/>
    <property type="evidence" value="ECO:0007669"/>
    <property type="project" value="TreeGrafter"/>
</dbReference>
<dbReference type="GO" id="GO:0006002">
    <property type="term" value="P:fructose 6-phosphate metabolic process"/>
    <property type="evidence" value="ECO:0007669"/>
    <property type="project" value="TreeGrafter"/>
</dbReference>
<dbReference type="GO" id="GO:0006000">
    <property type="term" value="P:fructose metabolic process"/>
    <property type="evidence" value="ECO:0007669"/>
    <property type="project" value="TreeGrafter"/>
</dbReference>
<dbReference type="GO" id="GO:0006094">
    <property type="term" value="P:gluconeogenesis"/>
    <property type="evidence" value="ECO:0007669"/>
    <property type="project" value="UniProtKB-UniRule"/>
</dbReference>
<dbReference type="GO" id="GO:0005986">
    <property type="term" value="P:sucrose biosynthetic process"/>
    <property type="evidence" value="ECO:0007669"/>
    <property type="project" value="TreeGrafter"/>
</dbReference>
<dbReference type="CDD" id="cd00354">
    <property type="entry name" value="FBPase"/>
    <property type="match status" value="1"/>
</dbReference>
<dbReference type="FunFam" id="3.30.540.10:FF:000006">
    <property type="entry name" value="Fructose-1,6-bisphosphatase class 1"/>
    <property type="match status" value="1"/>
</dbReference>
<dbReference type="FunFam" id="3.40.190.80:FF:000011">
    <property type="entry name" value="Fructose-1,6-bisphosphatase class 1"/>
    <property type="match status" value="1"/>
</dbReference>
<dbReference type="Gene3D" id="3.40.190.80">
    <property type="match status" value="1"/>
</dbReference>
<dbReference type="Gene3D" id="3.30.540.10">
    <property type="entry name" value="Fructose-1,6-Bisphosphatase, subunit A, domain 1"/>
    <property type="match status" value="1"/>
</dbReference>
<dbReference type="HAMAP" id="MF_01855">
    <property type="entry name" value="FBPase_class1"/>
    <property type="match status" value="1"/>
</dbReference>
<dbReference type="InterPro" id="IPR044015">
    <property type="entry name" value="FBPase_C_dom"/>
</dbReference>
<dbReference type="InterPro" id="IPR000146">
    <property type="entry name" value="FBPase_class-1"/>
</dbReference>
<dbReference type="InterPro" id="IPR033391">
    <property type="entry name" value="FBPase_N"/>
</dbReference>
<dbReference type="InterPro" id="IPR028343">
    <property type="entry name" value="FBPtase"/>
</dbReference>
<dbReference type="NCBIfam" id="NF006778">
    <property type="entry name" value="PRK09293.1-1"/>
    <property type="match status" value="1"/>
</dbReference>
<dbReference type="NCBIfam" id="NF006779">
    <property type="entry name" value="PRK09293.1-3"/>
    <property type="match status" value="1"/>
</dbReference>
<dbReference type="NCBIfam" id="NF006780">
    <property type="entry name" value="PRK09293.1-4"/>
    <property type="match status" value="1"/>
</dbReference>
<dbReference type="PANTHER" id="PTHR11556">
    <property type="entry name" value="FRUCTOSE-1,6-BISPHOSPHATASE-RELATED"/>
    <property type="match status" value="1"/>
</dbReference>
<dbReference type="PANTHER" id="PTHR11556:SF35">
    <property type="entry name" value="SEDOHEPTULOSE-1,7-BISPHOSPHATASE, CHLOROPLASTIC"/>
    <property type="match status" value="1"/>
</dbReference>
<dbReference type="Pfam" id="PF00316">
    <property type="entry name" value="FBPase"/>
    <property type="match status" value="1"/>
</dbReference>
<dbReference type="Pfam" id="PF18913">
    <property type="entry name" value="FBPase_C"/>
    <property type="match status" value="1"/>
</dbReference>
<dbReference type="PIRSF" id="PIRSF500210">
    <property type="entry name" value="FBPtase"/>
    <property type="match status" value="1"/>
</dbReference>
<dbReference type="PIRSF" id="PIRSF000904">
    <property type="entry name" value="FBPtase_SBPase"/>
    <property type="match status" value="1"/>
</dbReference>
<dbReference type="PRINTS" id="PR00115">
    <property type="entry name" value="F16BPHPHTASE"/>
</dbReference>
<dbReference type="SUPFAM" id="SSF56655">
    <property type="entry name" value="Carbohydrate phosphatase"/>
    <property type="match status" value="1"/>
</dbReference>
<reference key="1">
    <citation type="journal article" date="2003" name="Nat. Genet.">
        <title>Comparative analysis of the genome sequences of Bordetella pertussis, Bordetella parapertussis and Bordetella bronchiseptica.</title>
        <authorList>
            <person name="Parkhill J."/>
            <person name="Sebaihia M."/>
            <person name="Preston A."/>
            <person name="Murphy L.D."/>
            <person name="Thomson N.R."/>
            <person name="Harris D.E."/>
            <person name="Holden M.T.G."/>
            <person name="Churcher C.M."/>
            <person name="Bentley S.D."/>
            <person name="Mungall K.L."/>
            <person name="Cerdeno-Tarraga A.-M."/>
            <person name="Temple L."/>
            <person name="James K.D."/>
            <person name="Harris B."/>
            <person name="Quail M.A."/>
            <person name="Achtman M."/>
            <person name="Atkin R."/>
            <person name="Baker S."/>
            <person name="Basham D."/>
            <person name="Bason N."/>
            <person name="Cherevach I."/>
            <person name="Chillingworth T."/>
            <person name="Collins M."/>
            <person name="Cronin A."/>
            <person name="Davis P."/>
            <person name="Doggett J."/>
            <person name="Feltwell T."/>
            <person name="Goble A."/>
            <person name="Hamlin N."/>
            <person name="Hauser H."/>
            <person name="Holroyd S."/>
            <person name="Jagels K."/>
            <person name="Leather S."/>
            <person name="Moule S."/>
            <person name="Norberczak H."/>
            <person name="O'Neil S."/>
            <person name="Ormond D."/>
            <person name="Price C."/>
            <person name="Rabbinowitsch E."/>
            <person name="Rutter S."/>
            <person name="Sanders M."/>
            <person name="Saunders D."/>
            <person name="Seeger K."/>
            <person name="Sharp S."/>
            <person name="Simmonds M."/>
            <person name="Skelton J."/>
            <person name="Squares R."/>
            <person name="Squares S."/>
            <person name="Stevens K."/>
            <person name="Unwin L."/>
            <person name="Whitehead S."/>
            <person name="Barrell B.G."/>
            <person name="Maskell D.J."/>
        </authorList>
    </citation>
    <scope>NUCLEOTIDE SEQUENCE [LARGE SCALE GENOMIC DNA]</scope>
    <source>
        <strain>ATCC BAA-588 / NCTC 13252 / RB50</strain>
    </source>
</reference>
<accession>Q7WL20</accession>
<feature type="chain" id="PRO_0000364468" description="Fructose-1,6-bisphosphatase class 1">
    <location>
        <begin position="1"/>
        <end position="339"/>
    </location>
</feature>
<feature type="binding site" evidence="1">
    <location>
        <position position="91"/>
    </location>
    <ligand>
        <name>Mg(2+)</name>
        <dbReference type="ChEBI" id="CHEBI:18420"/>
        <label>1</label>
    </ligand>
</feature>
<feature type="binding site" evidence="1">
    <location>
        <position position="113"/>
    </location>
    <ligand>
        <name>Mg(2+)</name>
        <dbReference type="ChEBI" id="CHEBI:18420"/>
        <label>1</label>
    </ligand>
</feature>
<feature type="binding site" evidence="1">
    <location>
        <position position="113"/>
    </location>
    <ligand>
        <name>Mg(2+)</name>
        <dbReference type="ChEBI" id="CHEBI:18420"/>
        <label>2</label>
    </ligand>
</feature>
<feature type="binding site" evidence="1">
    <location>
        <position position="115"/>
    </location>
    <ligand>
        <name>Mg(2+)</name>
        <dbReference type="ChEBI" id="CHEBI:18420"/>
        <label>1</label>
    </ligand>
</feature>
<feature type="binding site" evidence="1">
    <location>
        <begin position="116"/>
        <end position="119"/>
    </location>
    <ligand>
        <name>substrate</name>
    </ligand>
</feature>
<feature type="binding site" evidence="1">
    <location>
        <position position="116"/>
    </location>
    <ligand>
        <name>Mg(2+)</name>
        <dbReference type="ChEBI" id="CHEBI:18420"/>
        <label>2</label>
    </ligand>
</feature>
<feature type="binding site" evidence="1">
    <location>
        <position position="210"/>
    </location>
    <ligand>
        <name>substrate</name>
    </ligand>
</feature>
<feature type="binding site" evidence="1">
    <location>
        <position position="276"/>
    </location>
    <ligand>
        <name>substrate</name>
    </ligand>
</feature>
<feature type="binding site" evidence="1">
    <location>
        <position position="282"/>
    </location>
    <ligand>
        <name>Mg(2+)</name>
        <dbReference type="ChEBI" id="CHEBI:18420"/>
        <label>2</label>
    </ligand>
</feature>
<protein>
    <recommendedName>
        <fullName evidence="1">Fructose-1,6-bisphosphatase class 1</fullName>
        <shortName evidence="1">FBPase class 1</shortName>
        <ecNumber evidence="1">3.1.3.11</ecNumber>
    </recommendedName>
    <alternativeName>
        <fullName evidence="1">D-fructose-1,6-bisphosphate 1-phosphohydrolase class 1</fullName>
    </alternativeName>
</protein>
<gene>
    <name evidence="1" type="primary">fbp</name>
    <name type="ordered locus">BB1929</name>
</gene>
<name>F16PA_BORBR</name>
<comment type="catalytic activity">
    <reaction evidence="1">
        <text>beta-D-fructose 1,6-bisphosphate + H2O = beta-D-fructose 6-phosphate + phosphate</text>
        <dbReference type="Rhea" id="RHEA:11064"/>
        <dbReference type="ChEBI" id="CHEBI:15377"/>
        <dbReference type="ChEBI" id="CHEBI:32966"/>
        <dbReference type="ChEBI" id="CHEBI:43474"/>
        <dbReference type="ChEBI" id="CHEBI:57634"/>
        <dbReference type="EC" id="3.1.3.11"/>
    </reaction>
</comment>
<comment type="cofactor">
    <cofactor evidence="1">
        <name>Mg(2+)</name>
        <dbReference type="ChEBI" id="CHEBI:18420"/>
    </cofactor>
    <text evidence="1">Binds 2 magnesium ions per subunit.</text>
</comment>
<comment type="pathway">
    <text evidence="1">Carbohydrate biosynthesis; gluconeogenesis.</text>
</comment>
<comment type="subunit">
    <text evidence="1">Homotetramer.</text>
</comment>
<comment type="subcellular location">
    <subcellularLocation>
        <location evidence="1">Cytoplasm</location>
    </subcellularLocation>
</comment>
<comment type="similarity">
    <text evidence="1">Belongs to the FBPase class 1 family.</text>
</comment>
<evidence type="ECO:0000255" key="1">
    <source>
        <dbReference type="HAMAP-Rule" id="MF_01855"/>
    </source>
</evidence>